<feature type="chain" id="PRO_0000096234" description="Alpha-amylase/trypsin inhibitor">
    <location>
        <begin position="1"/>
        <end position="206"/>
    </location>
</feature>
<feature type="disulfide bond" evidence="1">
    <location>
        <begin position="9"/>
        <end position="205"/>
    </location>
</feature>
<feature type="disulfide bond" evidence="1">
    <location>
        <begin position="51"/>
        <end position="61"/>
    </location>
</feature>
<feature type="disulfide bond" evidence="1">
    <location>
        <begin position="66"/>
        <end position="72"/>
    </location>
</feature>
<feature type="disulfide bond" evidence="1">
    <location>
        <begin position="118"/>
        <end position="194"/>
    </location>
</feature>
<feature type="disulfide bond" evidence="1">
    <location>
        <begin position="124"/>
        <end position="177"/>
    </location>
</feature>
<feature type="disulfide bond" evidence="1">
    <location>
        <begin position="132"/>
        <end position="142"/>
    </location>
</feature>
<feature type="disulfide bond" evidence="1">
    <location>
        <begin position="146"/>
        <end position="155"/>
    </location>
</feature>
<feature type="disulfide bond" evidence="1">
    <location>
        <begin position="156"/>
        <end position="164"/>
    </location>
</feature>
<feature type="sequence conflict" description="In Ref. 2; AA sequence." evidence="2" ref="2">
    <original>Y</original>
    <variation>M</variation>
    <location>
        <position position="108"/>
    </location>
</feature>
<accession>P13867</accession>
<comment type="function">
    <text>Inhibits both trypsin and alpha-amylase. Inhibits the growth of some plant fungal pathogens.</text>
</comment>
<comment type="similarity">
    <text evidence="1">Belongs to the thaumatin family.</text>
</comment>
<evidence type="ECO:0000255" key="1">
    <source>
        <dbReference type="PROSITE-ProRule" id="PRU00699"/>
    </source>
</evidence>
<evidence type="ECO:0000305" key="2"/>
<organism>
    <name type="scientific">Zea mays</name>
    <name type="common">Maize</name>
    <dbReference type="NCBI Taxonomy" id="4577"/>
    <lineage>
        <taxon>Eukaryota</taxon>
        <taxon>Viridiplantae</taxon>
        <taxon>Streptophyta</taxon>
        <taxon>Embryophyta</taxon>
        <taxon>Tracheophyta</taxon>
        <taxon>Spermatophyta</taxon>
        <taxon>Magnoliopsida</taxon>
        <taxon>Liliopsida</taxon>
        <taxon>Poales</taxon>
        <taxon>Poaceae</taxon>
        <taxon>PACMAD clade</taxon>
        <taxon>Panicoideae</taxon>
        <taxon>Andropogonodae</taxon>
        <taxon>Andropogoneae</taxon>
        <taxon>Tripsacinae</taxon>
        <taxon>Zea</taxon>
    </lineage>
</organism>
<proteinExistence type="evidence at protein level"/>
<reference key="1">
    <citation type="journal article" date="1987" name="Nature">
        <title>A possible function for thaumatin and a TMV-induced protein suggested by homology to a maize inhibitor.</title>
        <authorList>
            <person name="Richardson M."/>
            <person name="Valdes-Rodriguez S."/>
            <person name="Blanco-Labra A."/>
        </authorList>
    </citation>
    <scope>PROTEIN SEQUENCE</scope>
</reference>
<reference key="2">
    <citation type="journal article" date="1992" name="Biochem. Biophys. Res. Commun.">
        <title>Isolation and characterization of a 22 kDa protein with antifungal properties from maize seeds.</title>
        <authorList>
            <person name="Huynh Q.K."/>
            <person name="Borgmeyer J.R."/>
            <person name="Zobel J.F."/>
        </authorList>
    </citation>
    <scope>PROTEIN SEQUENCE</scope>
    <source>
        <tissue>Seed</tissue>
    </source>
</reference>
<name>IAAT_MAIZE</name>
<keyword id="KW-0929">Antimicrobial</keyword>
<keyword id="KW-0903">Direct protein sequencing</keyword>
<keyword id="KW-1015">Disulfide bond</keyword>
<keyword id="KW-0295">Fungicide</keyword>
<keyword id="KW-0611">Plant defense</keyword>
<keyword id="KW-0646">Protease inhibitor</keyword>
<keyword id="KW-1185">Reference proteome</keyword>
<keyword id="KW-0722">Serine protease inhibitor</keyword>
<protein>
    <recommendedName>
        <fullName>Alpha-amylase/trypsin inhibitor</fullName>
    </recommendedName>
    <alternativeName>
        <fullName>Antifungal protein</fullName>
    </alternativeName>
</protein>
<sequence>AVFTVVNQCPFTVWAASVPVGGGRQLNRGESWRITAPAGTTAARIWARTGCQFDASGRGSCRTGDCGGVVQCTGYGRAPNTLAEYALKQFNNLDFFDISILDGFNVPYSFLPDGGSGCSRGPRCAVDVNARCPAELRQDGVCNNACPVFKKDEYCCVGSAANNCHPTNYSRYFKGQCPDAYSYPKDDATSTFTCPAGTNYKVVFCP</sequence>
<dbReference type="PIR" id="A29581">
    <property type="entry name" value="A29581"/>
</dbReference>
<dbReference type="SMR" id="P13867"/>
<dbReference type="STRING" id="4577.P13867"/>
<dbReference type="MaizeGDB" id="69169"/>
<dbReference type="InParanoid" id="P13867"/>
<dbReference type="Proteomes" id="UP000007305">
    <property type="component" value="Unplaced"/>
</dbReference>
<dbReference type="ExpressionAtlas" id="P13867">
    <property type="expression patterns" value="baseline and differential"/>
</dbReference>
<dbReference type="GO" id="GO:0004867">
    <property type="term" value="F:serine-type endopeptidase inhibitor activity"/>
    <property type="evidence" value="ECO:0007669"/>
    <property type="project" value="UniProtKB-KW"/>
</dbReference>
<dbReference type="GO" id="GO:0006952">
    <property type="term" value="P:defense response"/>
    <property type="evidence" value="ECO:0000318"/>
    <property type="project" value="GO_Central"/>
</dbReference>
<dbReference type="GO" id="GO:0050832">
    <property type="term" value="P:defense response to fungus"/>
    <property type="evidence" value="ECO:0007669"/>
    <property type="project" value="UniProtKB-KW"/>
</dbReference>
<dbReference type="GO" id="GO:0031640">
    <property type="term" value="P:killing of cells of another organism"/>
    <property type="evidence" value="ECO:0007669"/>
    <property type="project" value="UniProtKB-KW"/>
</dbReference>
<dbReference type="FunFam" id="2.60.110.10:FF:000003">
    <property type="entry name" value="Thaumatin I"/>
    <property type="match status" value="1"/>
</dbReference>
<dbReference type="Gene3D" id="2.60.110.10">
    <property type="entry name" value="Thaumatin"/>
    <property type="match status" value="1"/>
</dbReference>
<dbReference type="InterPro" id="IPR037176">
    <property type="entry name" value="Osmotin/thaumatin-like_sf"/>
</dbReference>
<dbReference type="InterPro" id="IPR001938">
    <property type="entry name" value="Thaumatin"/>
</dbReference>
<dbReference type="InterPro" id="IPR017949">
    <property type="entry name" value="Thaumatin_CS"/>
</dbReference>
<dbReference type="PANTHER" id="PTHR31048">
    <property type="entry name" value="OS03G0233200 PROTEIN"/>
    <property type="match status" value="1"/>
</dbReference>
<dbReference type="Pfam" id="PF00314">
    <property type="entry name" value="Thaumatin"/>
    <property type="match status" value="1"/>
</dbReference>
<dbReference type="PIRSF" id="PIRSF002703">
    <property type="entry name" value="Thaumatin"/>
    <property type="match status" value="1"/>
</dbReference>
<dbReference type="PRINTS" id="PR00347">
    <property type="entry name" value="THAUMATIN"/>
</dbReference>
<dbReference type="SMART" id="SM00205">
    <property type="entry name" value="THN"/>
    <property type="match status" value="1"/>
</dbReference>
<dbReference type="SUPFAM" id="SSF49870">
    <property type="entry name" value="Osmotin, thaumatin-like protein"/>
    <property type="match status" value="1"/>
</dbReference>
<dbReference type="PROSITE" id="PS00316">
    <property type="entry name" value="THAUMATIN_1"/>
    <property type="match status" value="1"/>
</dbReference>
<dbReference type="PROSITE" id="PS51367">
    <property type="entry name" value="THAUMATIN_2"/>
    <property type="match status" value="1"/>
</dbReference>